<reference key="1">
    <citation type="journal article" date="1999" name="Nature">
        <title>Sequence and analysis of chromosome 2 of the plant Arabidopsis thaliana.</title>
        <authorList>
            <person name="Lin X."/>
            <person name="Kaul S."/>
            <person name="Rounsley S.D."/>
            <person name="Shea T.P."/>
            <person name="Benito M.-I."/>
            <person name="Town C.D."/>
            <person name="Fujii C.Y."/>
            <person name="Mason T.M."/>
            <person name="Bowman C.L."/>
            <person name="Barnstead M.E."/>
            <person name="Feldblyum T.V."/>
            <person name="Buell C.R."/>
            <person name="Ketchum K.A."/>
            <person name="Lee J.J."/>
            <person name="Ronning C.M."/>
            <person name="Koo H.L."/>
            <person name="Moffat K.S."/>
            <person name="Cronin L.A."/>
            <person name="Shen M."/>
            <person name="Pai G."/>
            <person name="Van Aken S."/>
            <person name="Umayam L."/>
            <person name="Tallon L.J."/>
            <person name="Gill J.E."/>
            <person name="Adams M.D."/>
            <person name="Carrera A.J."/>
            <person name="Creasy T.H."/>
            <person name="Goodman H.M."/>
            <person name="Somerville C.R."/>
            <person name="Copenhaver G.P."/>
            <person name="Preuss D."/>
            <person name="Nierman W.C."/>
            <person name="White O."/>
            <person name="Eisen J.A."/>
            <person name="Salzberg S.L."/>
            <person name="Fraser C.M."/>
            <person name="Venter J.C."/>
        </authorList>
    </citation>
    <scope>NUCLEOTIDE SEQUENCE [LARGE SCALE GENOMIC DNA]</scope>
    <source>
        <strain>cv. Columbia</strain>
    </source>
</reference>
<reference key="2">
    <citation type="journal article" date="2017" name="Plant J.">
        <title>Araport11: a complete reannotation of the Arabidopsis thaliana reference genome.</title>
        <authorList>
            <person name="Cheng C.Y."/>
            <person name="Krishnakumar V."/>
            <person name="Chan A.P."/>
            <person name="Thibaud-Nissen F."/>
            <person name="Schobel S."/>
            <person name="Town C.D."/>
        </authorList>
    </citation>
    <scope>GENOME REANNOTATION</scope>
    <source>
        <strain>cv. Columbia</strain>
    </source>
</reference>
<reference key="3">
    <citation type="submission" date="2005-05" db="EMBL/GenBank/DDBJ databases">
        <title>Arabidopsis ORF clones.</title>
        <authorList>
            <person name="Cheuk R.F."/>
            <person name="Chen H."/>
            <person name="Kim C.J."/>
            <person name="Shinn P."/>
            <person name="Ecker J.R."/>
        </authorList>
    </citation>
    <scope>NUCLEOTIDE SEQUENCE [LARGE SCALE MRNA]</scope>
    <source>
        <strain>cv. Columbia</strain>
    </source>
</reference>
<reference key="4">
    <citation type="journal article" date="2004" name="Plant Mol. Biol.">
        <title>Functional genomic analysis of Arabidopsis thaliana glycoside hydrolase family 1.</title>
        <authorList>
            <person name="Xu Z."/>
            <person name="Escamilla-Trevino L.L."/>
            <person name="Zeng L."/>
            <person name="Lalgondar M."/>
            <person name="Bevan D.R."/>
            <person name="Winkel B.S.J."/>
            <person name="Mohamed A."/>
            <person name="Cheng C.-L."/>
            <person name="Shih M.-C."/>
            <person name="Poulton J.E."/>
            <person name="Esen A."/>
        </authorList>
    </citation>
    <scope>GENE FAMILY</scope>
    <scope>NOMENCLATURE</scope>
</reference>
<protein>
    <recommendedName>
        <fullName evidence="7">Beta-glucosidase 28</fullName>
        <shortName evidence="7">AtBGLU28</shortName>
        <ecNumber evidence="1">3.2.1.21</ecNumber>
    </recommendedName>
</protein>
<name>BGL28_ARATH</name>
<accession>Q4V3B3</accession>
<accession>O64880</accession>
<evidence type="ECO:0000250" key="1">
    <source>
        <dbReference type="UniProtKB" id="O64879"/>
    </source>
</evidence>
<evidence type="ECO:0000250" key="2">
    <source>
        <dbReference type="UniProtKB" id="Q1XH05"/>
    </source>
</evidence>
<evidence type="ECO:0000250" key="3">
    <source>
        <dbReference type="UniProtKB" id="Q7XSK0"/>
    </source>
</evidence>
<evidence type="ECO:0000250" key="4">
    <source>
        <dbReference type="UniProtKB" id="Q9SPP9"/>
    </source>
</evidence>
<evidence type="ECO:0000255" key="5"/>
<evidence type="ECO:0000255" key="6">
    <source>
        <dbReference type="PROSITE-ProRule" id="PRU00498"/>
    </source>
</evidence>
<evidence type="ECO:0000303" key="7">
    <source>
    </source>
</evidence>
<evidence type="ECO:0000305" key="8"/>
<evidence type="ECO:0000312" key="9">
    <source>
        <dbReference type="Araport" id="AT2G44460"/>
    </source>
</evidence>
<evidence type="ECO:0000312" key="10">
    <source>
        <dbReference type="EMBL" id="AAC16092.1"/>
    </source>
</evidence>
<dbReference type="EC" id="3.2.1.21" evidence="1"/>
<dbReference type="EMBL" id="AC004521">
    <property type="protein sequence ID" value="AAC16092.1"/>
    <property type="status" value="ALT_SEQ"/>
    <property type="molecule type" value="Genomic_DNA"/>
</dbReference>
<dbReference type="EMBL" id="CP002685">
    <property type="protein sequence ID" value="AEC10422.1"/>
    <property type="molecule type" value="Genomic_DNA"/>
</dbReference>
<dbReference type="EMBL" id="BT023443">
    <property type="protein sequence ID" value="AAY56434.1"/>
    <property type="molecule type" value="mRNA"/>
</dbReference>
<dbReference type="PIR" id="T02401">
    <property type="entry name" value="T02401"/>
</dbReference>
<dbReference type="RefSeq" id="NP_850416.1">
    <property type="nucleotide sequence ID" value="NM_180085.4"/>
</dbReference>
<dbReference type="SMR" id="Q4V3B3"/>
<dbReference type="FunCoup" id="Q4V3B3">
    <property type="interactions" value="305"/>
</dbReference>
<dbReference type="STRING" id="3702.Q4V3B3"/>
<dbReference type="CAZy" id="GH1">
    <property type="family name" value="Glycoside Hydrolase Family 1"/>
</dbReference>
<dbReference type="GlyCosmos" id="Q4V3B3">
    <property type="glycosylation" value="6 sites, No reported glycans"/>
</dbReference>
<dbReference type="GlyGen" id="Q4V3B3">
    <property type="glycosylation" value="6 sites"/>
</dbReference>
<dbReference type="PaxDb" id="3702-AT2G44460.1"/>
<dbReference type="ProteomicsDB" id="241214"/>
<dbReference type="EnsemblPlants" id="AT2G44460.1">
    <property type="protein sequence ID" value="AT2G44460.1"/>
    <property type="gene ID" value="AT2G44460"/>
</dbReference>
<dbReference type="GeneID" id="819053"/>
<dbReference type="Gramene" id="AT2G44460.1">
    <property type="protein sequence ID" value="AT2G44460.1"/>
    <property type="gene ID" value="AT2G44460"/>
</dbReference>
<dbReference type="KEGG" id="ath:AT2G44460"/>
<dbReference type="Araport" id="AT2G44460"/>
<dbReference type="TAIR" id="AT2G44460">
    <property type="gene designation" value="BGLU28"/>
</dbReference>
<dbReference type="eggNOG" id="KOG0626">
    <property type="taxonomic scope" value="Eukaryota"/>
</dbReference>
<dbReference type="HOGENOM" id="CLU_001859_1_0_1"/>
<dbReference type="InParanoid" id="Q4V3B3"/>
<dbReference type="OMA" id="VRTIIYH"/>
<dbReference type="PhylomeDB" id="Q4V3B3"/>
<dbReference type="BioCyc" id="ARA:AT2G44460-MONOMER"/>
<dbReference type="PRO" id="PR:Q4V3B3"/>
<dbReference type="Proteomes" id="UP000006548">
    <property type="component" value="Chromosome 2"/>
</dbReference>
<dbReference type="ExpressionAtlas" id="Q4V3B3">
    <property type="expression patterns" value="baseline and differential"/>
</dbReference>
<dbReference type="GO" id="GO:0008422">
    <property type="term" value="F:beta-glucosidase activity"/>
    <property type="evidence" value="ECO:0007669"/>
    <property type="project" value="UniProtKB-EC"/>
</dbReference>
<dbReference type="GO" id="GO:0005975">
    <property type="term" value="P:carbohydrate metabolic process"/>
    <property type="evidence" value="ECO:0007669"/>
    <property type="project" value="InterPro"/>
</dbReference>
<dbReference type="FunFam" id="3.20.20.80:FF:000022">
    <property type="entry name" value="Beta-glucosidase 11"/>
    <property type="match status" value="1"/>
</dbReference>
<dbReference type="Gene3D" id="3.20.20.80">
    <property type="entry name" value="Glycosidases"/>
    <property type="match status" value="1"/>
</dbReference>
<dbReference type="InterPro" id="IPR001360">
    <property type="entry name" value="Glyco_hydro_1"/>
</dbReference>
<dbReference type="InterPro" id="IPR033132">
    <property type="entry name" value="Glyco_hydro_1_N_CS"/>
</dbReference>
<dbReference type="InterPro" id="IPR017853">
    <property type="entry name" value="Glycoside_hydrolase_SF"/>
</dbReference>
<dbReference type="PANTHER" id="PTHR10353:SF253">
    <property type="entry name" value="BETA-GLUCOSIDASE 28"/>
    <property type="match status" value="1"/>
</dbReference>
<dbReference type="PANTHER" id="PTHR10353">
    <property type="entry name" value="GLYCOSYL HYDROLASE"/>
    <property type="match status" value="1"/>
</dbReference>
<dbReference type="Pfam" id="PF00232">
    <property type="entry name" value="Glyco_hydro_1"/>
    <property type="match status" value="1"/>
</dbReference>
<dbReference type="PRINTS" id="PR00131">
    <property type="entry name" value="GLHYDRLASE1"/>
</dbReference>
<dbReference type="SUPFAM" id="SSF51445">
    <property type="entry name" value="(Trans)glycosidases"/>
    <property type="match status" value="1"/>
</dbReference>
<dbReference type="PROSITE" id="PS00653">
    <property type="entry name" value="GLYCOSYL_HYDROL_F1_2"/>
    <property type="match status" value="1"/>
</dbReference>
<keyword id="KW-1015">Disulfide bond</keyword>
<keyword id="KW-0325">Glycoprotein</keyword>
<keyword id="KW-0326">Glycosidase</keyword>
<keyword id="KW-0378">Hydrolase</keyword>
<keyword id="KW-1185">Reference proteome</keyword>
<keyword id="KW-0732">Signal</keyword>
<feature type="signal peptide" evidence="5">
    <location>
        <begin position="1"/>
        <end position="21"/>
    </location>
</feature>
<feature type="chain" id="PRO_0000389590" description="Beta-glucosidase 28">
    <location>
        <begin position="22"/>
        <end position="582"/>
    </location>
</feature>
<feature type="active site" description="Proton donor" evidence="3">
    <location>
        <position position="197"/>
    </location>
</feature>
<feature type="active site" description="Nucleophile" evidence="3">
    <location>
        <position position="412"/>
    </location>
</feature>
<feature type="binding site" evidence="3">
    <location>
        <position position="48"/>
    </location>
    <ligand>
        <name>a beta-D-glucoside</name>
        <dbReference type="ChEBI" id="CHEBI:22798"/>
    </ligand>
</feature>
<feature type="binding site" evidence="3">
    <location>
        <position position="151"/>
    </location>
    <ligand>
        <name>a beta-D-glucoside</name>
        <dbReference type="ChEBI" id="CHEBI:22798"/>
    </ligand>
</feature>
<feature type="binding site" evidence="3">
    <location>
        <begin position="196"/>
        <end position="197"/>
    </location>
    <ligand>
        <name>a beta-D-glucoside</name>
        <dbReference type="ChEBI" id="CHEBI:22798"/>
    </ligand>
</feature>
<feature type="binding site" evidence="3">
    <location>
        <position position="340"/>
    </location>
    <ligand>
        <name>a beta-D-glucoside</name>
        <dbReference type="ChEBI" id="CHEBI:22798"/>
    </ligand>
</feature>
<feature type="binding site" evidence="4">
    <location>
        <position position="412"/>
    </location>
    <ligand>
        <name>a beta-D-glucoside</name>
        <dbReference type="ChEBI" id="CHEBI:22798"/>
    </ligand>
</feature>
<feature type="binding site" evidence="3">
    <location>
        <position position="462"/>
    </location>
    <ligand>
        <name>a beta-D-glucoside</name>
        <dbReference type="ChEBI" id="CHEBI:22798"/>
    </ligand>
</feature>
<feature type="binding site" evidence="3">
    <location>
        <begin position="469"/>
        <end position="470"/>
    </location>
    <ligand>
        <name>a beta-D-glucoside</name>
        <dbReference type="ChEBI" id="CHEBI:22798"/>
    </ligand>
</feature>
<feature type="binding site" evidence="2">
    <location>
        <position position="478"/>
    </location>
    <ligand>
        <name>a beta-D-glucoside</name>
        <dbReference type="ChEBI" id="CHEBI:22798"/>
    </ligand>
</feature>
<feature type="glycosylation site" description="N-linked (GlcNAc...) asparagine" evidence="6">
    <location>
        <position position="255"/>
    </location>
</feature>
<feature type="glycosylation site" description="N-linked (GlcNAc...) asparagine" evidence="6">
    <location>
        <position position="330"/>
    </location>
</feature>
<feature type="glycosylation site" description="N-linked (GlcNAc...) asparagine" evidence="6">
    <location>
        <position position="370"/>
    </location>
</feature>
<feature type="glycosylation site" description="N-linked (GlcNAc...) asparagine" evidence="6">
    <location>
        <position position="430"/>
    </location>
</feature>
<feature type="glycosylation site" description="N-linked (GlcNAc...) asparagine" evidence="6">
    <location>
        <position position="521"/>
    </location>
</feature>
<feature type="glycosylation site" description="N-linked (GlcNAc...) asparagine" evidence="6">
    <location>
        <position position="544"/>
    </location>
</feature>
<feature type="disulfide bond" evidence="3">
    <location>
        <begin position="216"/>
        <end position="224"/>
    </location>
</feature>
<proteinExistence type="evidence at transcript level"/>
<organism>
    <name type="scientific">Arabidopsis thaliana</name>
    <name type="common">Mouse-ear cress</name>
    <dbReference type="NCBI Taxonomy" id="3702"/>
    <lineage>
        <taxon>Eukaryota</taxon>
        <taxon>Viridiplantae</taxon>
        <taxon>Streptophyta</taxon>
        <taxon>Embryophyta</taxon>
        <taxon>Tracheophyta</taxon>
        <taxon>Spermatophyta</taxon>
        <taxon>Magnoliopsida</taxon>
        <taxon>eudicotyledons</taxon>
        <taxon>Gunneridae</taxon>
        <taxon>Pentapetalae</taxon>
        <taxon>rosids</taxon>
        <taxon>malvids</taxon>
        <taxon>Brassicales</taxon>
        <taxon>Brassicaceae</taxon>
        <taxon>Camelineae</taxon>
        <taxon>Arabidopsis</taxon>
    </lineage>
</organism>
<comment type="catalytic activity">
    <reaction evidence="1">
        <text>Hydrolysis of terminal, non-reducing beta-D-glucosyl residues with release of beta-D-glucose.</text>
        <dbReference type="EC" id="3.2.1.21"/>
    </reaction>
</comment>
<comment type="similarity">
    <text evidence="8">Belongs to the glycosyl hydrolase 1 family.</text>
</comment>
<comment type="sequence caution" evidence="8">
    <conflict type="erroneous gene model prediction">
        <sequence resource="EMBL-CDS" id="AAC16092"/>
    </conflict>
</comment>
<gene>
    <name evidence="7" type="primary">BGLU28</name>
    <name evidence="9" type="ordered locus">At2g44460</name>
    <name evidence="10" type="ORF">F4I1.27</name>
</gene>
<sequence length="582" mass="67299">MKMHFFILLVITSWLSEKITSLPPDSRVFDRHGFPDNFVFGTAASAFQYEGATSEGGKSPSIWDYFSHTFPERTRMQNADVAVDFYHRYKDDIKLMKELNMDAFRFSISWARLIPSGKVKDGVNKEGVEFYKALIDELVANGIEPSMTLYHWDHPQSLEDEYGGFLSPQIVEDFRDFSRVCFEEFGDKVKMWTTINEPYVITVAGYDTGNKAVGRCSKWVNSKCQGGDSGTEPYIASHHLLLAHAAAVQEFRKCNKTQDGQIGIVLSPLWFEPYDSASPADNEAVKRALATELDWHLDPVIHGDYPEMMKKLAGNRLPSFTPEQSKMLKNSSDFIGINYYTARYVAHIPQADPARPRFVTDHQLQWRVTNHSNHQFGPGEDRGILQSHPEGLRKVLNYIKDKYNNPIVYIKENGINDYDDGTKSREEILNDTFRISYHEDHLQQLQKAIIEDGCDVRGYYVWSLLDNFEWEHGYSTRFGVYYVDYDNDLTRIPKDSVNWFKQFLDVKNKEIWDVSHKERYNKTFDDVESFEASVGSILYLMTNNISRREEEERDQCAFGNLNDQSGLLLESYNSFGFLENVW</sequence>